<protein>
    <recommendedName>
        <fullName evidence="1">N-acetylmuramic acid 6-phosphate etherase</fullName>
        <shortName evidence="1">MurNAc-6-P etherase</shortName>
        <ecNumber evidence="1">4.2.1.126</ecNumber>
    </recommendedName>
    <alternativeName>
        <fullName evidence="1">N-acetylmuramic acid 6-phosphate hydrolase</fullName>
    </alternativeName>
    <alternativeName>
        <fullName evidence="1">N-acetylmuramic acid 6-phosphate lyase</fullName>
    </alternativeName>
</protein>
<sequence>MLENLSTEHRNEKTMNLDEMSIKEILQSMNEEDRTVALAVENEIEQIEKVVQTVIKSFEEEGRLIYIGAGTSGRLGILDAVECPPTFGTDDKMVQGFIAGGLKAFTKAVEGAEDREELADEDLKSIGLNEKDTVIGIAASGRTPYVIGGLKYANRVGASTASISCNKNAEISKYAKINVEVGTGAEILTGSTRLKAGTAQKLVLNMISTASMIGVGKVYKNLMVDVQSTNEKLVERSKRIIVEATGVSYEVAAEYYEKAERNVKAAIVMVLLQCEYGEALQKLKEAKGFVKKAL</sequence>
<organism>
    <name type="scientific">Bacillus cereus (strain ATCC 10987 / NRS 248)</name>
    <dbReference type="NCBI Taxonomy" id="222523"/>
    <lineage>
        <taxon>Bacteria</taxon>
        <taxon>Bacillati</taxon>
        <taxon>Bacillota</taxon>
        <taxon>Bacilli</taxon>
        <taxon>Bacillales</taxon>
        <taxon>Bacillaceae</taxon>
        <taxon>Bacillus</taxon>
        <taxon>Bacillus cereus group</taxon>
    </lineage>
</organism>
<name>MURQ_BACC1</name>
<proteinExistence type="inferred from homology"/>
<gene>
    <name evidence="1" type="primary">murQ</name>
    <name type="ordered locus">BCE_0913</name>
</gene>
<feature type="chain" id="PRO_0000249604" description="N-acetylmuramic acid 6-phosphate etherase">
    <location>
        <begin position="1"/>
        <end position="294"/>
    </location>
</feature>
<feature type="domain" description="SIS" evidence="1">
    <location>
        <begin position="54"/>
        <end position="217"/>
    </location>
</feature>
<feature type="active site" description="Proton donor" evidence="1">
    <location>
        <position position="82"/>
    </location>
</feature>
<feature type="active site" evidence="1">
    <location>
        <position position="113"/>
    </location>
</feature>
<accession>Q73D01</accession>
<reference key="1">
    <citation type="journal article" date="2004" name="Nucleic Acids Res.">
        <title>The genome sequence of Bacillus cereus ATCC 10987 reveals metabolic adaptations and a large plasmid related to Bacillus anthracis pXO1.</title>
        <authorList>
            <person name="Rasko D.A."/>
            <person name="Ravel J."/>
            <person name="Oekstad O.A."/>
            <person name="Helgason E."/>
            <person name="Cer R.Z."/>
            <person name="Jiang L."/>
            <person name="Shores K.A."/>
            <person name="Fouts D.E."/>
            <person name="Tourasse N.J."/>
            <person name="Angiuoli S.V."/>
            <person name="Kolonay J.F."/>
            <person name="Nelson W.C."/>
            <person name="Kolstoe A.-B."/>
            <person name="Fraser C.M."/>
            <person name="Read T.D."/>
        </authorList>
    </citation>
    <scope>NUCLEOTIDE SEQUENCE [LARGE SCALE GENOMIC DNA]</scope>
    <source>
        <strain>ATCC 10987 / NRS 248</strain>
    </source>
</reference>
<keyword id="KW-0119">Carbohydrate metabolism</keyword>
<keyword id="KW-0456">Lyase</keyword>
<dbReference type="EC" id="4.2.1.126" evidence="1"/>
<dbReference type="EMBL" id="AE017194">
    <property type="protein sequence ID" value="AAS39844.1"/>
    <property type="molecule type" value="Genomic_DNA"/>
</dbReference>
<dbReference type="SMR" id="Q73D01"/>
<dbReference type="KEGG" id="bca:BCE_0913"/>
<dbReference type="HOGENOM" id="CLU_049049_1_1_9"/>
<dbReference type="UniPathway" id="UPA00342"/>
<dbReference type="Proteomes" id="UP000002527">
    <property type="component" value="Chromosome"/>
</dbReference>
<dbReference type="GO" id="GO:0097367">
    <property type="term" value="F:carbohydrate derivative binding"/>
    <property type="evidence" value="ECO:0007669"/>
    <property type="project" value="InterPro"/>
</dbReference>
<dbReference type="GO" id="GO:0016835">
    <property type="term" value="F:carbon-oxygen lyase activity"/>
    <property type="evidence" value="ECO:0007669"/>
    <property type="project" value="UniProtKB-UniRule"/>
</dbReference>
<dbReference type="GO" id="GO:0016803">
    <property type="term" value="F:ether hydrolase activity"/>
    <property type="evidence" value="ECO:0007669"/>
    <property type="project" value="TreeGrafter"/>
</dbReference>
<dbReference type="GO" id="GO:0046348">
    <property type="term" value="P:amino sugar catabolic process"/>
    <property type="evidence" value="ECO:0007669"/>
    <property type="project" value="InterPro"/>
</dbReference>
<dbReference type="GO" id="GO:0097173">
    <property type="term" value="P:N-acetylmuramic acid catabolic process"/>
    <property type="evidence" value="ECO:0007669"/>
    <property type="project" value="UniProtKB-UniPathway"/>
</dbReference>
<dbReference type="GO" id="GO:0009254">
    <property type="term" value="P:peptidoglycan turnover"/>
    <property type="evidence" value="ECO:0007669"/>
    <property type="project" value="TreeGrafter"/>
</dbReference>
<dbReference type="CDD" id="cd05007">
    <property type="entry name" value="SIS_Etherase"/>
    <property type="match status" value="1"/>
</dbReference>
<dbReference type="FunFam" id="1.10.8.1080:FF:000001">
    <property type="entry name" value="N-acetylmuramic acid 6-phosphate etherase"/>
    <property type="match status" value="1"/>
</dbReference>
<dbReference type="FunFam" id="3.40.50.10490:FF:000014">
    <property type="entry name" value="N-acetylmuramic acid 6-phosphate etherase"/>
    <property type="match status" value="1"/>
</dbReference>
<dbReference type="Gene3D" id="1.10.8.1080">
    <property type="match status" value="1"/>
</dbReference>
<dbReference type="Gene3D" id="3.40.50.10490">
    <property type="entry name" value="Glucose-6-phosphate isomerase like protein, domain 1"/>
    <property type="match status" value="1"/>
</dbReference>
<dbReference type="HAMAP" id="MF_00068">
    <property type="entry name" value="MurQ"/>
    <property type="match status" value="1"/>
</dbReference>
<dbReference type="InterPro" id="IPR005488">
    <property type="entry name" value="Etherase_MurQ"/>
</dbReference>
<dbReference type="InterPro" id="IPR005486">
    <property type="entry name" value="Glucokinase_regulatory_CS"/>
</dbReference>
<dbReference type="InterPro" id="IPR040190">
    <property type="entry name" value="MURQ/GCKR"/>
</dbReference>
<dbReference type="InterPro" id="IPR001347">
    <property type="entry name" value="SIS_dom"/>
</dbReference>
<dbReference type="InterPro" id="IPR046348">
    <property type="entry name" value="SIS_dom_sf"/>
</dbReference>
<dbReference type="NCBIfam" id="TIGR00274">
    <property type="entry name" value="N-acetylmuramic acid 6-phosphate etherase"/>
    <property type="match status" value="1"/>
</dbReference>
<dbReference type="NCBIfam" id="NF003915">
    <property type="entry name" value="PRK05441.1"/>
    <property type="match status" value="1"/>
</dbReference>
<dbReference type="NCBIfam" id="NF009222">
    <property type="entry name" value="PRK12570.1"/>
    <property type="match status" value="1"/>
</dbReference>
<dbReference type="PANTHER" id="PTHR10088">
    <property type="entry name" value="GLUCOKINASE REGULATORY PROTEIN"/>
    <property type="match status" value="1"/>
</dbReference>
<dbReference type="PANTHER" id="PTHR10088:SF4">
    <property type="entry name" value="GLUCOKINASE REGULATORY PROTEIN"/>
    <property type="match status" value="1"/>
</dbReference>
<dbReference type="Pfam" id="PF22645">
    <property type="entry name" value="GKRP_SIS_N"/>
    <property type="match status" value="1"/>
</dbReference>
<dbReference type="SUPFAM" id="SSF53697">
    <property type="entry name" value="SIS domain"/>
    <property type="match status" value="1"/>
</dbReference>
<dbReference type="PROSITE" id="PS01272">
    <property type="entry name" value="GCKR"/>
    <property type="match status" value="1"/>
</dbReference>
<dbReference type="PROSITE" id="PS51464">
    <property type="entry name" value="SIS"/>
    <property type="match status" value="1"/>
</dbReference>
<evidence type="ECO:0000255" key="1">
    <source>
        <dbReference type="HAMAP-Rule" id="MF_00068"/>
    </source>
</evidence>
<comment type="function">
    <text evidence="1">Specifically catalyzes the cleavage of the D-lactyl ether substituent of MurNAc 6-phosphate, producing GlcNAc 6-phosphate and D-lactate.</text>
</comment>
<comment type="catalytic activity">
    <reaction evidence="1">
        <text>N-acetyl-D-muramate 6-phosphate + H2O = N-acetyl-D-glucosamine 6-phosphate + (R)-lactate</text>
        <dbReference type="Rhea" id="RHEA:26410"/>
        <dbReference type="ChEBI" id="CHEBI:15377"/>
        <dbReference type="ChEBI" id="CHEBI:16004"/>
        <dbReference type="ChEBI" id="CHEBI:57513"/>
        <dbReference type="ChEBI" id="CHEBI:58722"/>
        <dbReference type="EC" id="4.2.1.126"/>
    </reaction>
</comment>
<comment type="pathway">
    <text evidence="1">Amino-sugar metabolism; N-acetylmuramate degradation.</text>
</comment>
<comment type="subunit">
    <text evidence="1">Homodimer.</text>
</comment>
<comment type="miscellaneous">
    <text evidence="1">A lyase-type mechanism (elimination/hydration) is suggested for the cleavage of the lactyl ether bond of MurNAc 6-phosphate, with the formation of an alpha,beta-unsaturated aldehyde intermediate with (E)-stereochemistry, followed by the syn addition of water to give product.</text>
</comment>
<comment type="similarity">
    <text evidence="1">Belongs to the GCKR-like family. MurNAc-6-P etherase subfamily.</text>
</comment>